<accession>P54900</accession>
<feature type="signal peptide" evidence="8">
    <location>
        <begin position="1"/>
        <end position="29"/>
    </location>
</feature>
<feature type="chain" id="PRO_0000014932" description="Sodium channel regulatory subunit beta-2">
    <location>
        <begin position="30"/>
        <end position="215"/>
    </location>
</feature>
<feature type="topological domain" description="Extracellular" evidence="12">
    <location>
        <begin position="30"/>
        <end position="157"/>
    </location>
</feature>
<feature type="transmembrane region" description="Helical" evidence="1">
    <location>
        <begin position="158"/>
        <end position="179"/>
    </location>
</feature>
<feature type="topological domain" description="Cytoplasmic" evidence="12">
    <location>
        <begin position="180"/>
        <end position="215"/>
    </location>
</feature>
<feature type="domain" description="Ig-like C2-type" evidence="2">
    <location>
        <begin position="32"/>
        <end position="154"/>
    </location>
</feature>
<feature type="region of interest" description="Disordered" evidence="4">
    <location>
        <begin position="187"/>
        <end position="215"/>
    </location>
</feature>
<feature type="compositionally biased region" description="Basic and acidic residues" evidence="4">
    <location>
        <begin position="189"/>
        <end position="215"/>
    </location>
</feature>
<feature type="site" description="Binds SCN2A" evidence="1">
    <location>
        <position position="56"/>
    </location>
</feature>
<feature type="site" description="Binds SCN2A" evidence="1">
    <location>
        <position position="135"/>
    </location>
</feature>
<feature type="modified residue" description="Phosphoserine" evidence="14">
    <location>
        <position position="192"/>
    </location>
</feature>
<feature type="modified residue" description="Phosphothreonine" evidence="14">
    <location>
        <position position="204"/>
    </location>
</feature>
<feature type="glycosylation site" description="N-linked (GlcNAc...) asparagine" evidence="2">
    <location>
        <position position="42"/>
    </location>
</feature>
<feature type="glycosylation site" description="N-linked (GlcNAc...) asparagine" evidence="2">
    <location>
        <position position="66"/>
    </location>
</feature>
<feature type="glycosylation site" description="N-linked (GlcNAc...) asparagine" evidence="2">
    <location>
        <position position="74"/>
    </location>
</feature>
<feature type="disulfide bond" evidence="3 6">
    <location>
        <begin position="50"/>
        <end position="127"/>
    </location>
</feature>
<feature type="disulfide bond" description="Interchain; with alpha subunit" evidence="6 7">
    <location>
        <position position="55"/>
    </location>
</feature>
<feature type="disulfide bond" evidence="1">
    <location>
        <begin position="72"/>
        <end position="75"/>
    </location>
</feature>
<feature type="sequence variant">
    <original>F</original>
    <variation>V</variation>
    <location>
        <position position="80"/>
    </location>
</feature>
<feature type="mutagenesis site" description="Loss of disulfide linkage with alpha subunit. No effect on localization to the plasma membrane. Loss of localization to node of Ranvier." evidence="6">
    <original>C</original>
    <variation>A</variation>
    <location>
        <position position="55"/>
    </location>
</feature>
<protein>
    <recommendedName>
        <fullName evidence="11">Sodium channel regulatory subunit beta-2</fullName>
    </recommendedName>
</protein>
<proteinExistence type="evidence at protein level"/>
<dbReference type="EMBL" id="U37026">
    <property type="protein sequence ID" value="AAC52967.1"/>
    <property type="molecule type" value="mRNA"/>
</dbReference>
<dbReference type="PIR" id="A57843">
    <property type="entry name" value="A57843"/>
</dbReference>
<dbReference type="RefSeq" id="NP_037009.1">
    <property type="nucleotide sequence ID" value="NM_012877.2"/>
</dbReference>
<dbReference type="SMR" id="P54900"/>
<dbReference type="BioGRID" id="247388">
    <property type="interactions" value="2"/>
</dbReference>
<dbReference type="FunCoup" id="P54900">
    <property type="interactions" value="891"/>
</dbReference>
<dbReference type="STRING" id="10116.ENSRNOP00000021819"/>
<dbReference type="GlyCosmos" id="P54900">
    <property type="glycosylation" value="3 sites, No reported glycans"/>
</dbReference>
<dbReference type="GlyGen" id="P54900">
    <property type="glycosylation" value="3 sites"/>
</dbReference>
<dbReference type="iPTMnet" id="P54900"/>
<dbReference type="PhosphoSitePlus" id="P54900"/>
<dbReference type="PaxDb" id="10116-ENSRNOP00000021819"/>
<dbReference type="ABCD" id="P54900">
    <property type="antibodies" value="1 sequenced antibody"/>
</dbReference>
<dbReference type="DNASU" id="25349"/>
<dbReference type="Ensembl" id="ENSRNOT00000106113.1">
    <property type="protein sequence ID" value="ENSRNOP00000078627.1"/>
    <property type="gene ID" value="ENSRNOG00000063505.1"/>
</dbReference>
<dbReference type="GeneID" id="25349"/>
<dbReference type="KEGG" id="rno:25349"/>
<dbReference type="UCSC" id="RGD:3633">
    <property type="organism name" value="rat"/>
</dbReference>
<dbReference type="AGR" id="RGD:3633"/>
<dbReference type="CTD" id="6327"/>
<dbReference type="RGD" id="3633">
    <property type="gene designation" value="Scn2b"/>
</dbReference>
<dbReference type="eggNOG" id="ENOG502R29H">
    <property type="taxonomic scope" value="Eukaryota"/>
</dbReference>
<dbReference type="GeneTree" id="ENSGT01030000234556"/>
<dbReference type="HOGENOM" id="CLU_090350_0_0_1"/>
<dbReference type="InParanoid" id="P54900"/>
<dbReference type="OMA" id="RLACTFN"/>
<dbReference type="OrthoDB" id="8750716at2759"/>
<dbReference type="PhylomeDB" id="P54900"/>
<dbReference type="TreeFam" id="TF331728"/>
<dbReference type="PRO" id="PR:P54900"/>
<dbReference type="Proteomes" id="UP000002494">
    <property type="component" value="Chromosome 8"/>
</dbReference>
<dbReference type="Bgee" id="ENSRNOG00000016221">
    <property type="expression patterns" value="Expressed in frontal cortex and 14 other cell types or tissues"/>
</dbReference>
<dbReference type="GO" id="GO:0043194">
    <property type="term" value="C:axon initial segment"/>
    <property type="evidence" value="ECO:0000314"/>
    <property type="project" value="UniProtKB"/>
</dbReference>
<dbReference type="GO" id="GO:0033268">
    <property type="term" value="C:node of Ranvier"/>
    <property type="evidence" value="ECO:0000314"/>
    <property type="project" value="UniProtKB"/>
</dbReference>
<dbReference type="GO" id="GO:0005886">
    <property type="term" value="C:plasma membrane"/>
    <property type="evidence" value="ECO:0000314"/>
    <property type="project" value="UniProtKB"/>
</dbReference>
<dbReference type="GO" id="GO:0030315">
    <property type="term" value="C:T-tubule"/>
    <property type="evidence" value="ECO:0000266"/>
    <property type="project" value="RGD"/>
</dbReference>
<dbReference type="GO" id="GO:0001518">
    <property type="term" value="C:voltage-gated sodium channel complex"/>
    <property type="evidence" value="ECO:0000250"/>
    <property type="project" value="UniProtKB"/>
</dbReference>
<dbReference type="GO" id="GO:0017080">
    <property type="term" value="F:sodium channel regulator activity"/>
    <property type="evidence" value="ECO:0000314"/>
    <property type="project" value="UniProtKB"/>
</dbReference>
<dbReference type="GO" id="GO:1902282">
    <property type="term" value="F:voltage-gated potassium channel activity involved in ventricular cardiac muscle cell action potential repolarization"/>
    <property type="evidence" value="ECO:0000266"/>
    <property type="project" value="RGD"/>
</dbReference>
<dbReference type="GO" id="GO:0005248">
    <property type="term" value="F:voltage-gated sodium channel activity"/>
    <property type="evidence" value="ECO:0000314"/>
    <property type="project" value="RGD"/>
</dbReference>
<dbReference type="GO" id="GO:0086006">
    <property type="term" value="F:voltage-gated sodium channel activity involved in cardiac muscle cell action potential"/>
    <property type="evidence" value="ECO:0000266"/>
    <property type="project" value="RGD"/>
</dbReference>
<dbReference type="GO" id="GO:0061337">
    <property type="term" value="P:cardiac conduction"/>
    <property type="evidence" value="ECO:0000266"/>
    <property type="project" value="RGD"/>
</dbReference>
<dbReference type="GO" id="GO:0086002">
    <property type="term" value="P:cardiac muscle cell action potential involved in contraction"/>
    <property type="evidence" value="ECO:0000266"/>
    <property type="project" value="RGD"/>
</dbReference>
<dbReference type="GO" id="GO:0060048">
    <property type="term" value="P:cardiac muscle contraction"/>
    <property type="evidence" value="ECO:0000266"/>
    <property type="project" value="RGD"/>
</dbReference>
<dbReference type="GO" id="GO:0010467">
    <property type="term" value="P:gene expression"/>
    <property type="evidence" value="ECO:0000266"/>
    <property type="project" value="RGD"/>
</dbReference>
<dbReference type="GO" id="GO:0086010">
    <property type="term" value="P:membrane depolarization during action potential"/>
    <property type="evidence" value="ECO:0000266"/>
    <property type="project" value="RGD"/>
</dbReference>
<dbReference type="GO" id="GO:0086012">
    <property type="term" value="P:membrane depolarization during cardiac muscle cell action potential"/>
    <property type="evidence" value="ECO:0000266"/>
    <property type="project" value="RGD"/>
</dbReference>
<dbReference type="GO" id="GO:0007399">
    <property type="term" value="P:nervous system development"/>
    <property type="evidence" value="ECO:0000270"/>
    <property type="project" value="RGD"/>
</dbReference>
<dbReference type="GO" id="GO:0010765">
    <property type="term" value="P:positive regulation of sodium ion transport"/>
    <property type="evidence" value="ECO:0000266"/>
    <property type="project" value="RGD"/>
</dbReference>
<dbReference type="GO" id="GO:0060371">
    <property type="term" value="P:regulation of atrial cardiac muscle cell membrane depolarization"/>
    <property type="evidence" value="ECO:0000266"/>
    <property type="project" value="RGD"/>
</dbReference>
<dbReference type="GO" id="GO:0086091">
    <property type="term" value="P:regulation of heart rate by cardiac conduction"/>
    <property type="evidence" value="ECO:0000266"/>
    <property type="project" value="RGD"/>
</dbReference>
<dbReference type="GO" id="GO:0009408">
    <property type="term" value="P:response to heat"/>
    <property type="evidence" value="ECO:0000266"/>
    <property type="project" value="RGD"/>
</dbReference>
<dbReference type="GO" id="GO:0046684">
    <property type="term" value="P:response to pyrethroid"/>
    <property type="evidence" value="ECO:0000314"/>
    <property type="project" value="RGD"/>
</dbReference>
<dbReference type="GO" id="GO:0006814">
    <property type="term" value="P:sodium ion transport"/>
    <property type="evidence" value="ECO:0000266"/>
    <property type="project" value="RGD"/>
</dbReference>
<dbReference type="FunFam" id="2.60.40.10:FF:001092">
    <property type="entry name" value="Sodium channel subunit beta-2"/>
    <property type="match status" value="1"/>
</dbReference>
<dbReference type="Gene3D" id="2.60.40.10">
    <property type="entry name" value="Immunoglobulins"/>
    <property type="match status" value="1"/>
</dbReference>
<dbReference type="InterPro" id="IPR007110">
    <property type="entry name" value="Ig-like_dom"/>
</dbReference>
<dbReference type="InterPro" id="IPR036179">
    <property type="entry name" value="Ig-like_dom_sf"/>
</dbReference>
<dbReference type="InterPro" id="IPR013783">
    <property type="entry name" value="Ig-like_fold"/>
</dbReference>
<dbReference type="InterPro" id="IPR003599">
    <property type="entry name" value="Ig_sub"/>
</dbReference>
<dbReference type="InterPro" id="IPR013106">
    <property type="entry name" value="Ig_V-set"/>
</dbReference>
<dbReference type="InterPro" id="IPR000920">
    <property type="entry name" value="Myelin_P0-rel"/>
</dbReference>
<dbReference type="PANTHER" id="PTHR13869">
    <property type="entry name" value="MYELIN P0 RELATED"/>
    <property type="match status" value="1"/>
</dbReference>
<dbReference type="PANTHER" id="PTHR13869:SF3">
    <property type="entry name" value="SODIUM CHANNEL SUBUNIT BETA-2"/>
    <property type="match status" value="1"/>
</dbReference>
<dbReference type="Pfam" id="PF07686">
    <property type="entry name" value="V-set"/>
    <property type="match status" value="1"/>
</dbReference>
<dbReference type="PRINTS" id="PR00213">
    <property type="entry name" value="MYELINP0"/>
</dbReference>
<dbReference type="SMART" id="SM00409">
    <property type="entry name" value="IG"/>
    <property type="match status" value="1"/>
</dbReference>
<dbReference type="SUPFAM" id="SSF48726">
    <property type="entry name" value="Immunoglobulin"/>
    <property type="match status" value="1"/>
</dbReference>
<dbReference type="PROSITE" id="PS50835">
    <property type="entry name" value="IG_LIKE"/>
    <property type="match status" value="1"/>
</dbReference>
<sequence length="215" mass="24145">MHRDAWLPRPAFSLTGLSLFFSLVPSGRSMEVTVPTTLSVLNGSDTRLPCTFNSCYTVNHKQFSLNWTYQECSNCSEEMFLQFRMKIINLKLERFGDRVEFSGNPSKYDVSVTLKNVQLEDEGIYNCYITNPPDRHRGHGKIYLQVLLEVPPERDSTVAVIVGASVGGFLAVVILVLMVVKCVRRKKEQKLSTDDLKTEEEGKTDGEGNAEDGAK</sequence>
<comment type="function">
    <text evidence="1 5 6 7">Regulatory subunit of multiple voltage-gated sodium (Nav) channels directly mediating the depolarization of excitable membranes. Navs, also called VGSCs (voltage-gated sodium channels) or VDSCs (voltage-dependent sodium channels), operate by switching between closed and open conformations depending on the voltage difference across the membrane. In the open conformation they allow Na(+) ions to selectively pass through the pore, along their electrochemical gradient. The influx of Na+ ions provokes membrane depolarization, initiating the propagation of electrical signals throughout cells and tissues (PubMed:15178439, PubMed:22992729, PubMed:26894959). The accessory beta subunits participate in localization and functional modulation of the Nav channels (PubMed:15178439, PubMed:22992729, PubMed:26894959). Modulates the activity of SCN1A/Nav1.1, SCN2A/Nav1.2, SCN2A/Nav1.3, SCN5A/Nav1.5, SCN8A/Nav1.6, SCN9A/Nav1.7 and SCN10A/Nav1.8 (By similarity) (PubMed:15178439, PubMed:22992729, PubMed:26894959).</text>
</comment>
<comment type="subunit">
    <text evidence="1 5 6 7 9">A voltage-gated sodium (Nav) channel consists of an ion-conducting pore-forming alpha subunit functional on its own that is regulated by one or more beta subunits (PubMed:22992729, PubMed:26894959). The beta subunit SCN2B is disulfide-linked to the pore-forming alpha subunit (PubMed:22992729, PubMed:26894959). Interacts with SCN1A; regulatory subunit of SCN1A/Nav1.1 (PubMed:22992729). Interacts with SCN2A; regulatory subunit of SCN2A/Nav1.2 (PubMed:26894959). Interacts with SCN3A; regulatory subunit of SCN3A/Nav1.3. Interacts with SCN5A; regulatory subunit of SCN5A/Nav1.5. Interacts with SCN8A; regulatory subunit of SCN8A/Nav1.6. Interacts with SCN9A; regulatory subunit of SCN9A/Nav1.7 (By similarity). Interacts with SCN10A; regulatory subunit of SCN10A/Nav1.8 (PubMed:15178439). Interacts with TNR; may play a crucial role in clustering and regulation of activity of SCN2B-containing Nav channels at nodes of Ranvier (PubMed:9861042).</text>
</comment>
<comment type="subcellular location">
    <subcellularLocation>
        <location evidence="6">Cell membrane</location>
        <topology evidence="1">Single-pass type I membrane protein</topology>
    </subcellularLocation>
    <subcellularLocation>
        <location evidence="6">Cell projection</location>
        <location evidence="6">Axon</location>
    </subcellularLocation>
    <text evidence="6">Clusters at the axon initial segment and node of Ranvier, the specialized neuronal subcellular domains involved in action potentials generation and propagation.</text>
</comment>
<comment type="developmental stage">
    <text>Detected in the earliest phase of neurogenesis in brain, and expression is greatly increased concomitant with axon extension and synaptogenesis.</text>
</comment>
<comment type="similarity">
    <text evidence="10">Belongs to the sodium channel auxiliary subunit SCN2B (TC 8.A.17) family.</text>
</comment>
<name>SCN2B_RAT</name>
<reference key="1">
    <citation type="journal article" date="1995" name="Cell">
        <title>Structure and function of the beta 2 subunit of brain sodium channels, a transmembrane glycoprotein with a CAM motif.</title>
        <authorList>
            <person name="Isom L.L."/>
            <person name="Ragsdale D.S."/>
            <person name="de Jongh K.S."/>
            <person name="Westenbroek R.E."/>
            <person name="Reber B.F.X."/>
            <person name="Scheuer T."/>
            <person name="Catterall W.A."/>
        </authorList>
    </citation>
    <scope>NUCLEOTIDE SEQUENCE [MRNA]</scope>
    <scope>PROTEIN SEQUENCE OF 30-58; 95-134 AND 142-151</scope>
    <scope>TOPOLOGY</scope>
</reference>
<reference key="2">
    <citation type="submission" date="2007-09" db="UniProtKB">
        <authorList>
            <person name="Lubec G."/>
            <person name="Kang S.U."/>
            <person name="Lubec S."/>
        </authorList>
    </citation>
    <scope>PROTEIN SEQUENCE OF 30-61; 99-135 AND 191-197</scope>
    <scope>IDENTIFICATION BY MASS SPECTROMETRY</scope>
    <source>
        <strain>Sprague-Dawley</strain>
        <tissue>Brain</tissue>
    </source>
</reference>
<reference key="3">
    <citation type="journal article" date="1998" name="Proc. Natl. Acad. Sci. U.S.A.">
        <title>Interaction of voltage-gated sodium channels with the extracellular matrix molecules tenascin-C and tenascin-R.</title>
        <authorList>
            <person name="Srinivasan J."/>
            <person name="Schachner M."/>
            <person name="Catterall W.A."/>
        </authorList>
    </citation>
    <scope>INTERACTION WITH TNR</scope>
</reference>
<reference key="4">
    <citation type="journal article" date="2004" name="Biochem. Biophys. Res. Commun.">
        <title>Role of auxiliary beta1-, beta2-, and beta3-subunits and their interaction with Na(v)1.8 voltage-gated sodium channel.</title>
        <authorList>
            <person name="Vijayaragavan K."/>
            <person name="Powell A.J."/>
            <person name="Kinghorn I.J."/>
            <person name="Chahine M."/>
        </authorList>
    </citation>
    <scope>FUNCTION</scope>
    <scope>SUBUNIT</scope>
    <scope>INTERACTION WITH SCN10A</scope>
</reference>
<reference key="5">
    <citation type="journal article" date="2012" name="J. Biol. Chem.">
        <title>Identification of the cysteine residue responsible for disulfide linkage of Na+ channel alpha and beta2 subunits.</title>
        <authorList>
            <person name="Chen C."/>
            <person name="Calhoun J.D."/>
            <person name="Zhang Y."/>
            <person name="Lopez-Santiago L."/>
            <person name="Zhou N."/>
            <person name="Davis T.H."/>
            <person name="Salzer J.L."/>
            <person name="Isom L.L."/>
        </authorList>
    </citation>
    <scope>FUNCTION</scope>
    <scope>SUBUNIT</scope>
    <scope>INTERACTION WITH SCN1A</scope>
    <scope>SUBCELLULAR LOCATION</scope>
    <scope>MUTAGENESIS OF CYS-55</scope>
    <scope>DISULFIDE BOND</scope>
</reference>
<reference key="6">
    <citation type="journal article" date="2012" name="Nat. Commun.">
        <title>Quantitative maps of protein phosphorylation sites across 14 different rat organs and tissues.</title>
        <authorList>
            <person name="Lundby A."/>
            <person name="Secher A."/>
            <person name="Lage K."/>
            <person name="Nordsborg N.B."/>
            <person name="Dmytriyev A."/>
            <person name="Lundby C."/>
            <person name="Olsen J.V."/>
        </authorList>
    </citation>
    <scope>PHOSPHORYLATION [LARGE SCALE ANALYSIS] AT SER-192 AND THR-204</scope>
    <scope>IDENTIFICATION BY MASS SPECTROMETRY [LARGE SCALE ANALYSIS]</scope>
</reference>
<reference key="7">
    <citation type="journal article" date="2016" name="Elife">
        <title>Binary architecture of the Nav1.2-beta2 signaling complex.</title>
        <authorList>
            <person name="Das S."/>
            <person name="Gilchrist J."/>
            <person name="Bosmans F."/>
            <person name="Van Petegem F."/>
        </authorList>
    </citation>
    <scope>FUNCTION</scope>
    <scope>SUBUNIT</scope>
    <scope>INTERACTION WITH SCN2A</scope>
    <scope>DISULFIDE BOND</scope>
</reference>
<organism>
    <name type="scientific">Rattus norvegicus</name>
    <name type="common">Rat</name>
    <dbReference type="NCBI Taxonomy" id="10116"/>
    <lineage>
        <taxon>Eukaryota</taxon>
        <taxon>Metazoa</taxon>
        <taxon>Chordata</taxon>
        <taxon>Craniata</taxon>
        <taxon>Vertebrata</taxon>
        <taxon>Euteleostomi</taxon>
        <taxon>Mammalia</taxon>
        <taxon>Eutheria</taxon>
        <taxon>Euarchontoglires</taxon>
        <taxon>Glires</taxon>
        <taxon>Rodentia</taxon>
        <taxon>Myomorpha</taxon>
        <taxon>Muroidea</taxon>
        <taxon>Muridae</taxon>
        <taxon>Murinae</taxon>
        <taxon>Rattus</taxon>
    </lineage>
</organism>
<keyword id="KW-1003">Cell membrane</keyword>
<keyword id="KW-0966">Cell projection</keyword>
<keyword id="KW-0903">Direct protein sequencing</keyword>
<keyword id="KW-1015">Disulfide bond</keyword>
<keyword id="KW-0325">Glycoprotein</keyword>
<keyword id="KW-0393">Immunoglobulin domain</keyword>
<keyword id="KW-0406">Ion transport</keyword>
<keyword id="KW-0472">Membrane</keyword>
<keyword id="KW-0597">Phosphoprotein</keyword>
<keyword id="KW-1185">Reference proteome</keyword>
<keyword id="KW-0732">Signal</keyword>
<keyword id="KW-0915">Sodium</keyword>
<keyword id="KW-0739">Sodium transport</keyword>
<keyword id="KW-0812">Transmembrane</keyword>
<keyword id="KW-1133">Transmembrane helix</keyword>
<keyword id="KW-0813">Transport</keyword>
<gene>
    <name evidence="13" type="primary">Scn2b</name>
</gene>
<evidence type="ECO:0000250" key="1">
    <source>
        <dbReference type="UniProtKB" id="O60939"/>
    </source>
</evidence>
<evidence type="ECO:0000255" key="2"/>
<evidence type="ECO:0000255" key="3">
    <source>
        <dbReference type="PROSITE-ProRule" id="PRU00114"/>
    </source>
</evidence>
<evidence type="ECO:0000256" key="4">
    <source>
        <dbReference type="SAM" id="MobiDB-lite"/>
    </source>
</evidence>
<evidence type="ECO:0000269" key="5">
    <source>
    </source>
</evidence>
<evidence type="ECO:0000269" key="6">
    <source>
    </source>
</evidence>
<evidence type="ECO:0000269" key="7">
    <source>
    </source>
</evidence>
<evidence type="ECO:0000269" key="8">
    <source>
    </source>
</evidence>
<evidence type="ECO:0000269" key="9">
    <source>
    </source>
</evidence>
<evidence type="ECO:0000305" key="10"/>
<evidence type="ECO:0000305" key="11">
    <source>
    </source>
</evidence>
<evidence type="ECO:0000305" key="12">
    <source>
    </source>
</evidence>
<evidence type="ECO:0000312" key="13">
    <source>
        <dbReference type="RGD" id="3633"/>
    </source>
</evidence>
<evidence type="ECO:0007744" key="14">
    <source>
    </source>
</evidence>